<sequence length="132" mass="13819">MATPRSAKKAARKSGSKSAKCGLIFPVGRVGGMMRRGQYARRIGASGAVYLAAVLEYLTAELLELSVKAAAQSGKKRCRLNPRTVMLAARHDDDIGTLLKNVTLSHSGVVPSVSKAVAKKKGGKKGRATPSA</sequence>
<comment type="function">
    <text>Core component of nucleosome. Nucleosomes wrap and compact DNA into chromatin, limiting DNA accessibility to the cellular machineries which require DNA as a template. Histones thereby play a central role in transcription regulation, DNA repair, DNA replication and chromosomal stability. DNA accessibility is regulated via a complex set of post-translational modifications of histones, also called histone code, and nucleosome remodeling.</text>
</comment>
<comment type="subunit">
    <text>The nucleosome is a histone octamer containing two molecules each of H2A, H2B, H3 and H4 assembled in one H3-H4 heterotetramer and two H2A-H2B heterodimers. The octamer wraps approximately 147 bp of DNA.</text>
</comment>
<comment type="subcellular location">
    <subcellularLocation>
        <location>Nucleus</location>
    </subcellularLocation>
    <subcellularLocation>
        <location>Chromosome</location>
    </subcellularLocation>
</comment>
<comment type="similarity">
    <text evidence="1">Belongs to the histone H2A family.</text>
</comment>
<name>H2A2_LEIIN</name>
<organism>
    <name type="scientific">Leishmania infantum</name>
    <dbReference type="NCBI Taxonomy" id="5671"/>
    <lineage>
        <taxon>Eukaryota</taxon>
        <taxon>Discoba</taxon>
        <taxon>Euglenozoa</taxon>
        <taxon>Kinetoplastea</taxon>
        <taxon>Metakinetoplastina</taxon>
        <taxon>Trypanosomatida</taxon>
        <taxon>Trypanosomatidae</taxon>
        <taxon>Leishmaniinae</taxon>
        <taxon>Leishmania</taxon>
    </lineage>
</organism>
<evidence type="ECO:0000305" key="1"/>
<feature type="chain" id="PRO_0000055247" description="Histone H2A.2">
    <location>
        <begin position="1"/>
        <end position="132"/>
    </location>
</feature>
<accession>P27892</accession>
<reference key="1">
    <citation type="journal article" date="1992" name="Eur. J. Biochem.">
        <title>Molecular characterization of a Leishmania donovani infantum antigen identified as histone H2A.</title>
        <authorList>
            <person name="Soto M."/>
            <person name="Requena J.M."/>
            <person name="Gomez L.C."/>
            <person name="Navarrete I."/>
            <person name="Alonso C."/>
        </authorList>
    </citation>
    <scope>NUCLEOTIDE SEQUENCE [MRNA]</scope>
    <source>
        <strain>MHOM/FR/78/LEM 75</strain>
    </source>
</reference>
<protein>
    <recommendedName>
        <fullName>Histone H2A.2</fullName>
    </recommendedName>
</protein>
<proteinExistence type="evidence at transcript level"/>
<dbReference type="EMBL" id="X61936">
    <property type="protein sequence ID" value="CAA43940.1"/>
    <property type="molecule type" value="mRNA"/>
</dbReference>
<dbReference type="PIR" id="S22391">
    <property type="entry name" value="S22391"/>
</dbReference>
<dbReference type="SMR" id="P27892"/>
<dbReference type="VEuPathDB" id="TriTrypDB:LINF_210016800"/>
<dbReference type="GO" id="GO:0000786">
    <property type="term" value="C:nucleosome"/>
    <property type="evidence" value="ECO:0007669"/>
    <property type="project" value="UniProtKB-KW"/>
</dbReference>
<dbReference type="GO" id="GO:0005634">
    <property type="term" value="C:nucleus"/>
    <property type="evidence" value="ECO:0007669"/>
    <property type="project" value="UniProtKB-SubCell"/>
</dbReference>
<dbReference type="GO" id="GO:0003677">
    <property type="term" value="F:DNA binding"/>
    <property type="evidence" value="ECO:0007669"/>
    <property type="project" value="UniProtKB-KW"/>
</dbReference>
<dbReference type="GO" id="GO:0046982">
    <property type="term" value="F:protein heterodimerization activity"/>
    <property type="evidence" value="ECO:0007669"/>
    <property type="project" value="InterPro"/>
</dbReference>
<dbReference type="GO" id="GO:0030527">
    <property type="term" value="F:structural constituent of chromatin"/>
    <property type="evidence" value="ECO:0007669"/>
    <property type="project" value="InterPro"/>
</dbReference>
<dbReference type="CDD" id="cd00074">
    <property type="entry name" value="HFD_H2A"/>
    <property type="match status" value="1"/>
</dbReference>
<dbReference type="FunFam" id="1.10.20.10:FF:000086">
    <property type="entry name" value="Histone H2A"/>
    <property type="match status" value="1"/>
</dbReference>
<dbReference type="Gene3D" id="1.10.20.10">
    <property type="entry name" value="Histone, subunit A"/>
    <property type="match status" value="1"/>
</dbReference>
<dbReference type="InterPro" id="IPR009072">
    <property type="entry name" value="Histone-fold"/>
</dbReference>
<dbReference type="InterPro" id="IPR002119">
    <property type="entry name" value="Histone_H2A"/>
</dbReference>
<dbReference type="InterPro" id="IPR007125">
    <property type="entry name" value="Histone_H2A/H2B/H3"/>
</dbReference>
<dbReference type="InterPro" id="IPR032454">
    <property type="entry name" value="Histone_H2A_C"/>
</dbReference>
<dbReference type="InterPro" id="IPR032458">
    <property type="entry name" value="Histone_H2A_CS"/>
</dbReference>
<dbReference type="PANTHER" id="PTHR23430">
    <property type="entry name" value="HISTONE H2A"/>
    <property type="match status" value="1"/>
</dbReference>
<dbReference type="Pfam" id="PF00125">
    <property type="entry name" value="Histone"/>
    <property type="match status" value="1"/>
</dbReference>
<dbReference type="Pfam" id="PF16211">
    <property type="entry name" value="Histone_H2A_C"/>
    <property type="match status" value="1"/>
</dbReference>
<dbReference type="PRINTS" id="PR00620">
    <property type="entry name" value="HISTONEH2A"/>
</dbReference>
<dbReference type="SMART" id="SM00414">
    <property type="entry name" value="H2A"/>
    <property type="match status" value="1"/>
</dbReference>
<dbReference type="SUPFAM" id="SSF47113">
    <property type="entry name" value="Histone-fold"/>
    <property type="match status" value="1"/>
</dbReference>
<dbReference type="PROSITE" id="PS00046">
    <property type="entry name" value="HISTONE_H2A"/>
    <property type="match status" value="1"/>
</dbReference>
<keyword id="KW-0158">Chromosome</keyword>
<keyword id="KW-0238">DNA-binding</keyword>
<keyword id="KW-0544">Nucleosome core</keyword>
<keyword id="KW-0539">Nucleus</keyword>